<dbReference type="EMBL" id="CP000386">
    <property type="protein sequence ID" value="ABG03496.1"/>
    <property type="molecule type" value="Genomic_DNA"/>
</dbReference>
<dbReference type="RefSeq" id="WP_011563514.1">
    <property type="nucleotide sequence ID" value="NC_008148.1"/>
</dbReference>
<dbReference type="SMR" id="Q1AYN2"/>
<dbReference type="STRING" id="266117.Rxyl_0522"/>
<dbReference type="KEGG" id="rxy:Rxyl_0522"/>
<dbReference type="eggNOG" id="COG0239">
    <property type="taxonomic scope" value="Bacteria"/>
</dbReference>
<dbReference type="HOGENOM" id="CLU_114342_2_3_11"/>
<dbReference type="OrthoDB" id="5148600at2"/>
<dbReference type="Proteomes" id="UP000006637">
    <property type="component" value="Chromosome"/>
</dbReference>
<dbReference type="GO" id="GO:0005886">
    <property type="term" value="C:plasma membrane"/>
    <property type="evidence" value="ECO:0007669"/>
    <property type="project" value="UniProtKB-SubCell"/>
</dbReference>
<dbReference type="GO" id="GO:0062054">
    <property type="term" value="F:fluoride channel activity"/>
    <property type="evidence" value="ECO:0007669"/>
    <property type="project" value="UniProtKB-UniRule"/>
</dbReference>
<dbReference type="GO" id="GO:0140114">
    <property type="term" value="P:cellular detoxification of fluoride"/>
    <property type="evidence" value="ECO:0007669"/>
    <property type="project" value="UniProtKB-UniRule"/>
</dbReference>
<dbReference type="HAMAP" id="MF_00454">
    <property type="entry name" value="FluC"/>
    <property type="match status" value="1"/>
</dbReference>
<dbReference type="InterPro" id="IPR003691">
    <property type="entry name" value="FluC"/>
</dbReference>
<dbReference type="PANTHER" id="PTHR28259">
    <property type="entry name" value="FLUORIDE EXPORT PROTEIN 1-RELATED"/>
    <property type="match status" value="1"/>
</dbReference>
<dbReference type="PANTHER" id="PTHR28259:SF1">
    <property type="entry name" value="FLUORIDE EXPORT PROTEIN 1-RELATED"/>
    <property type="match status" value="1"/>
</dbReference>
<dbReference type="Pfam" id="PF02537">
    <property type="entry name" value="CRCB"/>
    <property type="match status" value="1"/>
</dbReference>
<reference key="1">
    <citation type="submission" date="2006-06" db="EMBL/GenBank/DDBJ databases">
        <title>Complete sequence of Rubrobacter xylanophilus DSM 9941.</title>
        <authorList>
            <consortium name="US DOE Joint Genome Institute"/>
            <person name="Copeland A."/>
            <person name="Lucas S."/>
            <person name="Lapidus A."/>
            <person name="Barry K."/>
            <person name="Detter J.C."/>
            <person name="Glavina del Rio T."/>
            <person name="Hammon N."/>
            <person name="Israni S."/>
            <person name="Dalin E."/>
            <person name="Tice H."/>
            <person name="Pitluck S."/>
            <person name="Munk A.C."/>
            <person name="Brettin T."/>
            <person name="Bruce D."/>
            <person name="Han C."/>
            <person name="Tapia R."/>
            <person name="Gilna P."/>
            <person name="Schmutz J."/>
            <person name="Larimer F."/>
            <person name="Land M."/>
            <person name="Hauser L."/>
            <person name="Kyrpides N."/>
            <person name="Lykidis A."/>
            <person name="da Costa M.S."/>
            <person name="Rainey F.A."/>
            <person name="Empadinhas N."/>
            <person name="Jolivet E."/>
            <person name="Battista J.R."/>
            <person name="Richardson P."/>
        </authorList>
    </citation>
    <scope>NUCLEOTIDE SEQUENCE [LARGE SCALE GENOMIC DNA]</scope>
    <source>
        <strain>DSM 9941 / JCM 11954 / NBRC 16129 / PRD-1</strain>
    </source>
</reference>
<protein>
    <recommendedName>
        <fullName evidence="1">Fluoride-specific ion channel FluC 1</fullName>
    </recommendedName>
</protein>
<evidence type="ECO:0000255" key="1">
    <source>
        <dbReference type="HAMAP-Rule" id="MF_00454"/>
    </source>
</evidence>
<organism>
    <name type="scientific">Rubrobacter xylanophilus (strain DSM 9941 / JCM 11954 / NBRC 16129 / PRD-1)</name>
    <dbReference type="NCBI Taxonomy" id="266117"/>
    <lineage>
        <taxon>Bacteria</taxon>
        <taxon>Bacillati</taxon>
        <taxon>Actinomycetota</taxon>
        <taxon>Rubrobacteria</taxon>
        <taxon>Rubrobacterales</taxon>
        <taxon>Rubrobacteraceae</taxon>
        <taxon>Rubrobacter</taxon>
    </lineage>
</organism>
<keyword id="KW-1003">Cell membrane</keyword>
<keyword id="KW-0407">Ion channel</keyword>
<keyword id="KW-0406">Ion transport</keyword>
<keyword id="KW-0472">Membrane</keyword>
<keyword id="KW-1185">Reference proteome</keyword>
<keyword id="KW-0812">Transmembrane</keyword>
<keyword id="KW-1133">Transmembrane helix</keyword>
<keyword id="KW-0813">Transport</keyword>
<comment type="function">
    <text evidence="1">Fluoride-specific ion channel. Important for reducing fluoride concentration in the cell, thus reducing its toxicity.</text>
</comment>
<comment type="catalytic activity">
    <reaction evidence="1">
        <text>fluoride(in) = fluoride(out)</text>
        <dbReference type="Rhea" id="RHEA:76159"/>
        <dbReference type="ChEBI" id="CHEBI:17051"/>
    </reaction>
    <physiologicalReaction direction="left-to-right" evidence="1">
        <dbReference type="Rhea" id="RHEA:76160"/>
    </physiologicalReaction>
</comment>
<comment type="subcellular location">
    <subcellularLocation>
        <location evidence="1">Cell membrane</location>
        <topology evidence="1">Multi-pass membrane protein</topology>
    </subcellularLocation>
</comment>
<comment type="similarity">
    <text evidence="1">Belongs to the fluoride channel Fluc/FEX (TC 1.A.43) family.</text>
</comment>
<name>FLUC1_RUBXD</name>
<feature type="chain" id="PRO_0000252932" description="Fluoride-specific ion channel FluC 1">
    <location>
        <begin position="1"/>
        <end position="124"/>
    </location>
</feature>
<feature type="transmembrane region" description="Helical" evidence="1">
    <location>
        <begin position="7"/>
        <end position="27"/>
    </location>
</feature>
<feature type="transmembrane region" description="Helical" evidence="1">
    <location>
        <begin position="35"/>
        <end position="55"/>
    </location>
</feature>
<feature type="transmembrane region" description="Helical" evidence="1">
    <location>
        <begin position="63"/>
        <end position="83"/>
    </location>
</feature>
<feature type="transmembrane region" description="Helical" evidence="1">
    <location>
        <begin position="101"/>
        <end position="121"/>
    </location>
</feature>
<gene>
    <name evidence="1" type="primary">fluC1</name>
    <name evidence="1" type="synonym">crcB1</name>
    <name type="ordered locus">Rxyl_0522</name>
</gene>
<proteinExistence type="inferred from homology"/>
<sequence>MAPAELALTLAAAGAGSVLRYLLGGWVAHRMGPEFPWGTLAVNALGCLGLGLLQGAAPHDRALLLVLGSGLLAGFTTFSTLMLETANLATAGERDRAFSNIVGTLALGLFALSAGARAGAWAAG</sequence>
<accession>Q1AYN2</accession>